<sequence>MSWSSALIKDISKPENLIISSEIAVVIADKFPKAQHHYLVLPLADIPSIFHLNRSHLSLLEELHLLARNVVEVKGVRWQDFNVGFHAEPSMQRLHLHVISKDFVSTSLKTKKHWNSFNTELFVPYTKLYAQLEKENSISRLPKSLKDELLAKPLICNQCEFVARNLPSLKGHLVGHLQDPKSVCQRVRLGNQFFPTAGYRTSELAYCFDFVDFYEYKKQMEVDKLAYIRDELQRKLNDKRNFLIESDRAVVMKADYPKSQYHFRVVAKEEFRDITQLTEAQLPLLDHMMDLANQIIEKQKHLESRNFLIGFKVNTFWNRLNLHVISNDFYSMAMKRISHWNSFNTELFMPFQIAYMMLSVQGSIESISEETYNNLQEKTPLRCNQCEFVTNMLLDLKAHLYQHWQRKEDERDQKKKVDKIIQMISETKLDEAEAKPKLLNEEEPIQAQPVAAIAQYPNEHLGKPLTPQQQPGKQQAQNVYDKNINGPSVNMMNQNNPNNPFRNTPHLNRQSQKPPHPRSGPRGPMAPWTGPRFPCHQQQNRFRPPGFNACRQPYPPYHSGHQQFPNASSVGGGQTGLPGQGQGPRPKWNSNKIFNQQNRQNTVQAQPQAQNQQTNQQQIQNSNKNQTPKKKPWKNRLQPVGKVQNQGGANRDPAPPSNSKPS</sequence>
<name>APTX_DROME</name>
<feature type="chain" id="PRO_0000109849" description="Aprataxin-like protein">
    <location>
        <begin position="1"/>
        <end position="662"/>
    </location>
</feature>
<feature type="domain" description="HIT" evidence="2">
    <location>
        <begin position="4"/>
        <end position="108"/>
    </location>
</feature>
<feature type="zinc finger region" description="C2H2-type">
    <location>
        <begin position="381"/>
        <end position="403"/>
    </location>
</feature>
<feature type="region of interest" description="Disordered" evidence="3">
    <location>
        <begin position="482"/>
        <end position="662"/>
    </location>
</feature>
<feature type="compositionally biased region" description="Low complexity" evidence="3">
    <location>
        <begin position="490"/>
        <end position="500"/>
    </location>
</feature>
<feature type="compositionally biased region" description="Polar residues" evidence="3">
    <location>
        <begin position="501"/>
        <end position="513"/>
    </location>
</feature>
<feature type="compositionally biased region" description="Polar residues" evidence="3">
    <location>
        <begin position="560"/>
        <end position="569"/>
    </location>
</feature>
<feature type="compositionally biased region" description="Gly residues" evidence="3">
    <location>
        <begin position="570"/>
        <end position="582"/>
    </location>
</feature>
<feature type="compositionally biased region" description="Polar residues" evidence="3">
    <location>
        <begin position="588"/>
        <end position="599"/>
    </location>
</feature>
<feature type="compositionally biased region" description="Low complexity" evidence="3">
    <location>
        <begin position="600"/>
        <end position="626"/>
    </location>
</feature>
<feature type="compositionally biased region" description="Pro residues" evidence="3">
    <location>
        <begin position="653"/>
        <end position="662"/>
    </location>
</feature>
<feature type="splice variant" id="VSP_010547" description="In isoform D." evidence="5">
    <location>
        <begin position="1"/>
        <end position="90"/>
    </location>
</feature>
<feature type="splice variant" id="VSP_047935" description="In isoform A." evidence="4">
    <original>K</original>
    <variation>SKAIRTRRRLQAS</variation>
    <location>
        <position position="127"/>
    </location>
</feature>
<feature type="splice variant" id="VSP_047936" description="In isoform A." evidence="4">
    <location>
        <begin position="128"/>
        <end position="662"/>
    </location>
</feature>
<feature type="sequence conflict" description="In Ref. 3; AAM50692." evidence="6" ref="3">
    <original>A</original>
    <variation>D</variation>
    <location>
        <position position="44"/>
    </location>
</feature>
<feature type="sequence conflict" description="In Ref. 3; AAM50692." evidence="6" ref="3">
    <original>T</original>
    <variation>K</variation>
    <location>
        <position position="106"/>
    </location>
</feature>
<feature type="sequence conflict" description="In Ref. 5; AAS93744." evidence="6" ref="5">
    <original>K</original>
    <variation>E</variation>
    <location>
        <position position="109"/>
    </location>
</feature>
<feature type="sequence conflict" description="In Ref. 3; AAM50692." evidence="6" ref="3">
    <original>F</original>
    <variation>I</variation>
    <location>
        <position position="194"/>
    </location>
</feature>
<feature type="sequence conflict" description="In Ref. 3; AAM50692." evidence="6" ref="3">
    <original>K</original>
    <variation>T</variation>
    <location>
        <position position="300"/>
    </location>
</feature>
<feature type="sequence conflict" description="In Ref. 3; AAM50692." evidence="6" ref="3">
    <original>E</original>
    <variation>K</variation>
    <location>
        <position position="410"/>
    </location>
</feature>
<feature type="sequence conflict" description="In Ref. 3; AAM50692." evidence="6" ref="3">
    <original>N</original>
    <variation>P</variation>
    <location>
        <position position="440"/>
    </location>
</feature>
<feature type="sequence conflict" description="In Ref. 3; AAM50692." evidence="6" ref="3">
    <original>AA</original>
    <variation>GSG</variation>
    <location>
        <begin position="451"/>
        <end position="452"/>
    </location>
</feature>
<dbReference type="EC" id="3.-.-.-"/>
<dbReference type="EMBL" id="AE014297">
    <property type="protein sequence ID" value="AAF55666.2"/>
    <property type="molecule type" value="Genomic_DNA"/>
</dbReference>
<dbReference type="EMBL" id="AE014297">
    <property type="protein sequence ID" value="AAF55667.1"/>
    <property type="molecule type" value="Genomic_DNA"/>
</dbReference>
<dbReference type="EMBL" id="AE014297">
    <property type="protein sequence ID" value="AAN13800.1"/>
    <property type="molecule type" value="Genomic_DNA"/>
</dbReference>
<dbReference type="EMBL" id="AY118832">
    <property type="protein sequence ID" value="AAM50692.1"/>
    <property type="molecule type" value="mRNA"/>
</dbReference>
<dbReference type="EMBL" id="BT011192">
    <property type="protein sequence ID" value="AFZ88725.1"/>
    <property type="molecule type" value="mRNA"/>
</dbReference>
<dbReference type="EMBL" id="BT012473">
    <property type="protein sequence ID" value="AAS93744.1"/>
    <property type="molecule type" value="mRNA"/>
</dbReference>
<dbReference type="RefSeq" id="NP_650805.1">
    <molecule id="Q8MSG8-1"/>
    <property type="nucleotide sequence ID" value="NM_142548.2"/>
</dbReference>
<dbReference type="RefSeq" id="NP_732421.1">
    <molecule id="Q8MSG8-1"/>
    <property type="nucleotide sequence ID" value="NM_169858.1"/>
</dbReference>
<dbReference type="RefSeq" id="NP_732422.1">
    <molecule id="Q8MSG8-4"/>
    <property type="nucleotide sequence ID" value="NM_169859.3"/>
</dbReference>
<dbReference type="SMR" id="Q8MSG8"/>
<dbReference type="BioGRID" id="67317">
    <property type="interactions" value="2"/>
</dbReference>
<dbReference type="FunCoup" id="Q8MSG8">
    <property type="interactions" value="392"/>
</dbReference>
<dbReference type="IntAct" id="Q8MSG8">
    <property type="interactions" value="1"/>
</dbReference>
<dbReference type="STRING" id="7227.FBpp0083174"/>
<dbReference type="PaxDb" id="7227-FBpp0083172"/>
<dbReference type="EnsemblMetazoa" id="FBtr0083758">
    <molecule id="Q8MSG8-1"/>
    <property type="protein sequence ID" value="FBpp0083172"/>
    <property type="gene ID" value="FBgn0038704"/>
</dbReference>
<dbReference type="EnsemblMetazoa" id="FBtr0083759">
    <molecule id="Q8MSG8-4"/>
    <property type="protein sequence ID" value="FBpp0083173"/>
    <property type="gene ID" value="FBgn0038704"/>
</dbReference>
<dbReference type="EnsemblMetazoa" id="FBtr0083760">
    <molecule id="Q8MSG8-1"/>
    <property type="protein sequence ID" value="FBpp0083174"/>
    <property type="gene ID" value="FBgn0038704"/>
</dbReference>
<dbReference type="GeneID" id="42322"/>
<dbReference type="KEGG" id="dme:Dmel_CG5316"/>
<dbReference type="UCSC" id="CG5316-RA">
    <molecule id="Q8MSG8-1"/>
    <property type="organism name" value="d. melanogaster"/>
</dbReference>
<dbReference type="UCSC" id="CG5316-RC">
    <property type="organism name" value="d. melanogaster"/>
</dbReference>
<dbReference type="AGR" id="FB:FBgn0038704"/>
<dbReference type="CTD" id="54840"/>
<dbReference type="FlyBase" id="FBgn0038704">
    <property type="gene designation" value="CG5316"/>
</dbReference>
<dbReference type="VEuPathDB" id="VectorBase:FBgn0038704"/>
<dbReference type="eggNOG" id="KOG0562">
    <property type="taxonomic scope" value="Eukaryota"/>
</dbReference>
<dbReference type="GeneTree" id="ENSGT00940000156806"/>
<dbReference type="HOGENOM" id="CLU_024713_0_0_1"/>
<dbReference type="InParanoid" id="Q8MSG8"/>
<dbReference type="OMA" id="HWTIFNS"/>
<dbReference type="OrthoDB" id="3512845at2759"/>
<dbReference type="PhylomeDB" id="Q8MSG8"/>
<dbReference type="BioGRID-ORCS" id="42322">
    <property type="hits" value="0 hits in 1 CRISPR screen"/>
</dbReference>
<dbReference type="ChiTaRS" id="CG5316">
    <property type="organism name" value="fly"/>
</dbReference>
<dbReference type="GenomeRNAi" id="42322"/>
<dbReference type="PRO" id="PR:Q8MSG8"/>
<dbReference type="Proteomes" id="UP000000803">
    <property type="component" value="Chromosome 3R"/>
</dbReference>
<dbReference type="Bgee" id="FBgn0038704">
    <property type="expression patterns" value="Expressed in spermatocyte in testis and 183 other cell types or tissues"/>
</dbReference>
<dbReference type="ExpressionAtlas" id="Q8MSG8">
    <property type="expression patterns" value="baseline and differential"/>
</dbReference>
<dbReference type="GO" id="GO:0005634">
    <property type="term" value="C:nucleus"/>
    <property type="evidence" value="ECO:0000318"/>
    <property type="project" value="GO_Central"/>
</dbReference>
<dbReference type="GO" id="GO:0071011">
    <property type="term" value="C:precatalytic spliceosome"/>
    <property type="evidence" value="ECO:0007005"/>
    <property type="project" value="FlyBase"/>
</dbReference>
<dbReference type="GO" id="GO:0003684">
    <property type="term" value="F:damaged DNA binding"/>
    <property type="evidence" value="ECO:0000250"/>
    <property type="project" value="UniProtKB"/>
</dbReference>
<dbReference type="GO" id="GO:0033699">
    <property type="term" value="F:DNA 5'-adenosine monophosphate hydrolase activity"/>
    <property type="evidence" value="ECO:0000318"/>
    <property type="project" value="GO_Central"/>
</dbReference>
<dbReference type="GO" id="GO:0003725">
    <property type="term" value="F:double-stranded RNA binding"/>
    <property type="evidence" value="ECO:0000318"/>
    <property type="project" value="GO_Central"/>
</dbReference>
<dbReference type="GO" id="GO:0030983">
    <property type="term" value="F:mismatched DNA binding"/>
    <property type="evidence" value="ECO:0000318"/>
    <property type="project" value="GO_Central"/>
</dbReference>
<dbReference type="GO" id="GO:1990165">
    <property type="term" value="F:single-strand break-containing DNA binding"/>
    <property type="evidence" value="ECO:0000318"/>
    <property type="project" value="GO_Central"/>
</dbReference>
<dbReference type="GO" id="GO:0003697">
    <property type="term" value="F:single-stranded DNA binding"/>
    <property type="evidence" value="ECO:0000318"/>
    <property type="project" value="GO_Central"/>
</dbReference>
<dbReference type="GO" id="GO:0008270">
    <property type="term" value="F:zinc ion binding"/>
    <property type="evidence" value="ECO:0007669"/>
    <property type="project" value="UniProtKB-KW"/>
</dbReference>
<dbReference type="GO" id="GO:0000398">
    <property type="term" value="P:mRNA splicing, via spliceosome"/>
    <property type="evidence" value="ECO:0000305"/>
    <property type="project" value="FlyBase"/>
</dbReference>
<dbReference type="GO" id="GO:0000012">
    <property type="term" value="P:single strand break repair"/>
    <property type="evidence" value="ECO:0000250"/>
    <property type="project" value="UniProtKB"/>
</dbReference>
<dbReference type="FunFam" id="3.30.428.10:FF:000004">
    <property type="entry name" value="aprataxin isoform X2"/>
    <property type="match status" value="2"/>
</dbReference>
<dbReference type="Gene3D" id="3.30.428.10">
    <property type="entry name" value="HIT-like"/>
    <property type="match status" value="2"/>
</dbReference>
<dbReference type="InterPro" id="IPR019808">
    <property type="entry name" value="Histidine_triad_CS"/>
</dbReference>
<dbReference type="InterPro" id="IPR011146">
    <property type="entry name" value="HIT-like"/>
</dbReference>
<dbReference type="InterPro" id="IPR036265">
    <property type="entry name" value="HIT-like_sf"/>
</dbReference>
<dbReference type="InterPro" id="IPR032566">
    <property type="entry name" value="Znf-C2HE"/>
</dbReference>
<dbReference type="InterPro" id="IPR013087">
    <property type="entry name" value="Znf_C2H2_type"/>
</dbReference>
<dbReference type="PANTHER" id="PTHR12486:SF4">
    <property type="entry name" value="APRATAXIN"/>
    <property type="match status" value="1"/>
</dbReference>
<dbReference type="PANTHER" id="PTHR12486">
    <property type="entry name" value="APRATAXIN-RELATED"/>
    <property type="match status" value="1"/>
</dbReference>
<dbReference type="Pfam" id="PF11969">
    <property type="entry name" value="DcpS_C"/>
    <property type="match status" value="2"/>
</dbReference>
<dbReference type="Pfam" id="PF16278">
    <property type="entry name" value="zf-C2HE"/>
    <property type="match status" value="2"/>
</dbReference>
<dbReference type="SMART" id="SM00355">
    <property type="entry name" value="ZnF_C2H2"/>
    <property type="match status" value="2"/>
</dbReference>
<dbReference type="SUPFAM" id="SSF54197">
    <property type="entry name" value="HIT-like"/>
    <property type="match status" value="2"/>
</dbReference>
<dbReference type="PROSITE" id="PS00892">
    <property type="entry name" value="HIT_1"/>
    <property type="match status" value="1"/>
</dbReference>
<dbReference type="PROSITE" id="PS51084">
    <property type="entry name" value="HIT_2"/>
    <property type="match status" value="1"/>
</dbReference>
<organism>
    <name type="scientific">Drosophila melanogaster</name>
    <name type="common">Fruit fly</name>
    <dbReference type="NCBI Taxonomy" id="7227"/>
    <lineage>
        <taxon>Eukaryota</taxon>
        <taxon>Metazoa</taxon>
        <taxon>Ecdysozoa</taxon>
        <taxon>Arthropoda</taxon>
        <taxon>Hexapoda</taxon>
        <taxon>Insecta</taxon>
        <taxon>Pterygota</taxon>
        <taxon>Neoptera</taxon>
        <taxon>Endopterygota</taxon>
        <taxon>Diptera</taxon>
        <taxon>Brachycera</taxon>
        <taxon>Muscomorpha</taxon>
        <taxon>Ephydroidea</taxon>
        <taxon>Drosophilidae</taxon>
        <taxon>Drosophila</taxon>
        <taxon>Sophophora</taxon>
    </lineage>
</organism>
<gene>
    <name type="ORF">CG5316</name>
</gene>
<accession>Q8MSG8</accession>
<accession>A4V347</accession>
<accession>L0BID2</accession>
<accession>Q9VDX2</accession>
<accession>Q9VDX3</accession>
<keyword id="KW-0025">Alternative splicing</keyword>
<keyword id="KW-0227">DNA damage</keyword>
<keyword id="KW-0234">DNA repair</keyword>
<keyword id="KW-0238">DNA-binding</keyword>
<keyword id="KW-0378">Hydrolase</keyword>
<keyword id="KW-0479">Metal-binding</keyword>
<keyword id="KW-0539">Nucleus</keyword>
<keyword id="KW-1185">Reference proteome</keyword>
<keyword id="KW-0862">Zinc</keyword>
<keyword id="KW-0863">Zinc-finger</keyword>
<reference key="1">
    <citation type="journal article" date="2000" name="Science">
        <title>The genome sequence of Drosophila melanogaster.</title>
        <authorList>
            <person name="Adams M.D."/>
            <person name="Celniker S.E."/>
            <person name="Holt R.A."/>
            <person name="Evans C.A."/>
            <person name="Gocayne J.D."/>
            <person name="Amanatides P.G."/>
            <person name="Scherer S.E."/>
            <person name="Li P.W."/>
            <person name="Hoskins R.A."/>
            <person name="Galle R.F."/>
            <person name="George R.A."/>
            <person name="Lewis S.E."/>
            <person name="Richards S."/>
            <person name="Ashburner M."/>
            <person name="Henderson S.N."/>
            <person name="Sutton G.G."/>
            <person name="Wortman J.R."/>
            <person name="Yandell M.D."/>
            <person name="Zhang Q."/>
            <person name="Chen L.X."/>
            <person name="Brandon R.C."/>
            <person name="Rogers Y.-H.C."/>
            <person name="Blazej R.G."/>
            <person name="Champe M."/>
            <person name="Pfeiffer B.D."/>
            <person name="Wan K.H."/>
            <person name="Doyle C."/>
            <person name="Baxter E.G."/>
            <person name="Helt G."/>
            <person name="Nelson C.R."/>
            <person name="Miklos G.L.G."/>
            <person name="Abril J.F."/>
            <person name="Agbayani A."/>
            <person name="An H.-J."/>
            <person name="Andrews-Pfannkoch C."/>
            <person name="Baldwin D."/>
            <person name="Ballew R.M."/>
            <person name="Basu A."/>
            <person name="Baxendale J."/>
            <person name="Bayraktaroglu L."/>
            <person name="Beasley E.M."/>
            <person name="Beeson K.Y."/>
            <person name="Benos P.V."/>
            <person name="Berman B.P."/>
            <person name="Bhandari D."/>
            <person name="Bolshakov S."/>
            <person name="Borkova D."/>
            <person name="Botchan M.R."/>
            <person name="Bouck J."/>
            <person name="Brokstein P."/>
            <person name="Brottier P."/>
            <person name="Burtis K.C."/>
            <person name="Busam D.A."/>
            <person name="Butler H."/>
            <person name="Cadieu E."/>
            <person name="Center A."/>
            <person name="Chandra I."/>
            <person name="Cherry J.M."/>
            <person name="Cawley S."/>
            <person name="Dahlke C."/>
            <person name="Davenport L.B."/>
            <person name="Davies P."/>
            <person name="de Pablos B."/>
            <person name="Delcher A."/>
            <person name="Deng Z."/>
            <person name="Mays A.D."/>
            <person name="Dew I."/>
            <person name="Dietz S.M."/>
            <person name="Dodson K."/>
            <person name="Doup L.E."/>
            <person name="Downes M."/>
            <person name="Dugan-Rocha S."/>
            <person name="Dunkov B.C."/>
            <person name="Dunn P."/>
            <person name="Durbin K.J."/>
            <person name="Evangelista C.C."/>
            <person name="Ferraz C."/>
            <person name="Ferriera S."/>
            <person name="Fleischmann W."/>
            <person name="Fosler C."/>
            <person name="Gabrielian A.E."/>
            <person name="Garg N.S."/>
            <person name="Gelbart W.M."/>
            <person name="Glasser K."/>
            <person name="Glodek A."/>
            <person name="Gong F."/>
            <person name="Gorrell J.H."/>
            <person name="Gu Z."/>
            <person name="Guan P."/>
            <person name="Harris M."/>
            <person name="Harris N.L."/>
            <person name="Harvey D.A."/>
            <person name="Heiman T.J."/>
            <person name="Hernandez J.R."/>
            <person name="Houck J."/>
            <person name="Hostin D."/>
            <person name="Houston K.A."/>
            <person name="Howland T.J."/>
            <person name="Wei M.-H."/>
            <person name="Ibegwam C."/>
            <person name="Jalali M."/>
            <person name="Kalush F."/>
            <person name="Karpen G.H."/>
            <person name="Ke Z."/>
            <person name="Kennison J.A."/>
            <person name="Ketchum K.A."/>
            <person name="Kimmel B.E."/>
            <person name="Kodira C.D."/>
            <person name="Kraft C.L."/>
            <person name="Kravitz S."/>
            <person name="Kulp D."/>
            <person name="Lai Z."/>
            <person name="Lasko P."/>
            <person name="Lei Y."/>
            <person name="Levitsky A.A."/>
            <person name="Li J.H."/>
            <person name="Li Z."/>
            <person name="Liang Y."/>
            <person name="Lin X."/>
            <person name="Liu X."/>
            <person name="Mattei B."/>
            <person name="McIntosh T.C."/>
            <person name="McLeod M.P."/>
            <person name="McPherson D."/>
            <person name="Merkulov G."/>
            <person name="Milshina N.V."/>
            <person name="Mobarry C."/>
            <person name="Morris J."/>
            <person name="Moshrefi A."/>
            <person name="Mount S.M."/>
            <person name="Moy M."/>
            <person name="Murphy B."/>
            <person name="Murphy L."/>
            <person name="Muzny D.M."/>
            <person name="Nelson D.L."/>
            <person name="Nelson D.R."/>
            <person name="Nelson K.A."/>
            <person name="Nixon K."/>
            <person name="Nusskern D.R."/>
            <person name="Pacleb J.M."/>
            <person name="Palazzolo M."/>
            <person name="Pittman G.S."/>
            <person name="Pan S."/>
            <person name="Pollard J."/>
            <person name="Puri V."/>
            <person name="Reese M.G."/>
            <person name="Reinert K."/>
            <person name="Remington K."/>
            <person name="Saunders R.D.C."/>
            <person name="Scheeler F."/>
            <person name="Shen H."/>
            <person name="Shue B.C."/>
            <person name="Siden-Kiamos I."/>
            <person name="Simpson M."/>
            <person name="Skupski M.P."/>
            <person name="Smith T.J."/>
            <person name="Spier E."/>
            <person name="Spradling A.C."/>
            <person name="Stapleton M."/>
            <person name="Strong R."/>
            <person name="Sun E."/>
            <person name="Svirskas R."/>
            <person name="Tector C."/>
            <person name="Turner R."/>
            <person name="Venter E."/>
            <person name="Wang A.H."/>
            <person name="Wang X."/>
            <person name="Wang Z.-Y."/>
            <person name="Wassarman D.A."/>
            <person name="Weinstock G.M."/>
            <person name="Weissenbach J."/>
            <person name="Williams S.M."/>
            <person name="Woodage T."/>
            <person name="Worley K.C."/>
            <person name="Wu D."/>
            <person name="Yang S."/>
            <person name="Yao Q.A."/>
            <person name="Ye J."/>
            <person name="Yeh R.-F."/>
            <person name="Zaveri J.S."/>
            <person name="Zhan M."/>
            <person name="Zhang G."/>
            <person name="Zhao Q."/>
            <person name="Zheng L."/>
            <person name="Zheng X.H."/>
            <person name="Zhong F.N."/>
            <person name="Zhong W."/>
            <person name="Zhou X."/>
            <person name="Zhu S.C."/>
            <person name="Zhu X."/>
            <person name="Smith H.O."/>
            <person name="Gibbs R.A."/>
            <person name="Myers E.W."/>
            <person name="Rubin G.M."/>
            <person name="Venter J.C."/>
        </authorList>
    </citation>
    <scope>NUCLEOTIDE SEQUENCE [LARGE SCALE GENOMIC DNA]</scope>
    <source>
        <strain>Berkeley</strain>
    </source>
</reference>
<reference key="2">
    <citation type="journal article" date="2002" name="Genome Biol.">
        <title>Annotation of the Drosophila melanogaster euchromatic genome: a systematic review.</title>
        <authorList>
            <person name="Misra S."/>
            <person name="Crosby M.A."/>
            <person name="Mungall C.J."/>
            <person name="Matthews B.B."/>
            <person name="Campbell K.S."/>
            <person name="Hradecky P."/>
            <person name="Huang Y."/>
            <person name="Kaminker J.S."/>
            <person name="Millburn G.H."/>
            <person name="Prochnik S.E."/>
            <person name="Smith C.D."/>
            <person name="Tupy J.L."/>
            <person name="Whitfield E.J."/>
            <person name="Bayraktaroglu L."/>
            <person name="Berman B.P."/>
            <person name="Bettencourt B.R."/>
            <person name="Celniker S.E."/>
            <person name="de Grey A.D.N.J."/>
            <person name="Drysdale R.A."/>
            <person name="Harris N.L."/>
            <person name="Richter J."/>
            <person name="Russo S."/>
            <person name="Schroeder A.J."/>
            <person name="Shu S.Q."/>
            <person name="Stapleton M."/>
            <person name="Yamada C."/>
            <person name="Ashburner M."/>
            <person name="Gelbart W.M."/>
            <person name="Rubin G.M."/>
            <person name="Lewis S.E."/>
        </authorList>
    </citation>
    <scope>GENOME REANNOTATION</scope>
    <source>
        <strain>Berkeley</strain>
    </source>
</reference>
<reference key="3">
    <citation type="journal article" date="2002" name="Genome Biol.">
        <title>A Drosophila full-length cDNA resource.</title>
        <authorList>
            <person name="Stapleton M."/>
            <person name="Carlson J.W."/>
            <person name="Brokstein P."/>
            <person name="Yu C."/>
            <person name="Champe M."/>
            <person name="George R.A."/>
            <person name="Guarin H."/>
            <person name="Kronmiller B."/>
            <person name="Pacleb J.M."/>
            <person name="Park S."/>
            <person name="Wan K.H."/>
            <person name="Rubin G.M."/>
            <person name="Celniker S.E."/>
        </authorList>
    </citation>
    <scope>NUCLEOTIDE SEQUENCE [LARGE SCALE MRNA] (ISOFORM B)</scope>
    <source>
        <strain>Berkeley</strain>
        <tissue>Ovary</tissue>
    </source>
</reference>
<reference key="4">
    <citation type="submission" date="2004-01" db="EMBL/GenBank/DDBJ databases">
        <authorList>
            <person name="Stapleton M."/>
            <person name="Brokstein P."/>
            <person name="Hong L."/>
            <person name="Agbayani A."/>
            <person name="Carlson J."/>
            <person name="Champe M."/>
            <person name="Chavez C."/>
            <person name="Dorsett V."/>
            <person name="Dresnek D."/>
            <person name="Farfan D."/>
            <person name="Frise E."/>
            <person name="George R."/>
            <person name="Gonzalez M."/>
            <person name="Guarin H."/>
            <person name="Kronmiller B."/>
            <person name="Li P."/>
            <person name="Liao G."/>
            <person name="Miranda A."/>
            <person name="Mungall C.J."/>
            <person name="Nunoo J."/>
            <person name="Pacleb J."/>
            <person name="Paragas V."/>
            <person name="Park S."/>
            <person name="Patel S."/>
            <person name="Phouanenavong S."/>
            <person name="Wan K."/>
            <person name="Yu C."/>
            <person name="Lewis S.E."/>
            <person name="Rubin G.M."/>
            <person name="Celniker S."/>
        </authorList>
    </citation>
    <scope>NUCLEOTIDE SEQUENCE [LARGE SCALE MRNA] (ISOFORM A)</scope>
    <source>
        <strain>Berkeley</strain>
        <tissue>Larva</tissue>
        <tissue>Pupae</tissue>
    </source>
</reference>
<reference key="5">
    <citation type="submission" date="2004-04" db="EMBL/GenBank/DDBJ databases">
        <authorList>
            <person name="Stapleton M."/>
            <person name="Carlson J.W."/>
            <person name="Chavez C."/>
            <person name="Frise E."/>
            <person name="George R.A."/>
            <person name="Pacleb J.M."/>
            <person name="Park S."/>
            <person name="Wan K.H."/>
            <person name="Yu C."/>
            <person name="Rubin G.M."/>
            <person name="Celniker S.E."/>
        </authorList>
    </citation>
    <scope>NUCLEOTIDE SEQUENCE [LARGE SCALE MRNA] (ISOFORM D)</scope>
    <source>
        <strain>Berkeley</strain>
        <tissue>Embryo</tissue>
        <tissue>Larva</tissue>
        <tissue>Pupae</tissue>
    </source>
</reference>
<comment type="function">
    <text evidence="1">DNA-binding protein involved in single-strand DNA break repair, double-strand DNA break repair and base excision repair. Resolves abortive DNA ligation intermediates formed either at base excision sites, or when DNA ligases attempt to repair non-ligatable breaks induced by reactive oxygen species. Catalyzes the release of adenylate groups covalently linked to 5'-phosphate termini, resulting in the production of 5'-phosphate termini that can be efficiently rejoined (By similarity).</text>
</comment>
<comment type="subcellular location">
    <subcellularLocation>
        <location evidence="1">Nucleus</location>
    </subcellularLocation>
</comment>
<comment type="alternative products">
    <event type="alternative splicing"/>
    <isoform>
        <id>Q8MSG8-1</id>
        <name>B</name>
        <name>C</name>
        <sequence type="displayed"/>
    </isoform>
    <isoform>
        <id>Q8MSG8-2</id>
        <name>D</name>
        <sequence type="described" ref="VSP_010547"/>
    </isoform>
    <isoform>
        <id>Q8MSG8-4</id>
        <name>A</name>
        <sequence type="described" ref="VSP_047935 VSP_047936"/>
    </isoform>
</comment>
<comment type="domain">
    <text evidence="1">The HIT domain is required for enzymatic activity.</text>
</comment>
<comment type="domain">
    <text evidence="1">The C2H2-type zinc finger mediates DNA-binding.</text>
</comment>
<protein>
    <recommendedName>
        <fullName>Aprataxin-like protein</fullName>
        <ecNumber>3.-.-.-</ecNumber>
    </recommendedName>
</protein>
<proteinExistence type="evidence at transcript level"/>
<evidence type="ECO:0000250" key="1"/>
<evidence type="ECO:0000255" key="2">
    <source>
        <dbReference type="PROSITE-ProRule" id="PRU00464"/>
    </source>
</evidence>
<evidence type="ECO:0000256" key="3">
    <source>
        <dbReference type="SAM" id="MobiDB-lite"/>
    </source>
</evidence>
<evidence type="ECO:0000303" key="4">
    <source ref="4"/>
</evidence>
<evidence type="ECO:0000303" key="5">
    <source ref="5"/>
</evidence>
<evidence type="ECO:0000305" key="6"/>